<gene>
    <name evidence="1" type="primary">dnaA</name>
    <name type="ordered locus">SMU_01</name>
</gene>
<reference key="1">
    <citation type="journal article" date="2002" name="Proc. Natl. Acad. Sci. U.S.A.">
        <title>Genome sequence of Streptococcus mutans UA159, a cariogenic dental pathogen.</title>
        <authorList>
            <person name="Ajdic D.J."/>
            <person name="McShan W.M."/>
            <person name="McLaughlin R.E."/>
            <person name="Savic G."/>
            <person name="Chang J."/>
            <person name="Carson M.B."/>
            <person name="Primeaux C."/>
            <person name="Tian R."/>
            <person name="Kenton S."/>
            <person name="Jia H.G."/>
            <person name="Lin S.P."/>
            <person name="Qian Y."/>
            <person name="Li S."/>
            <person name="Zhu H."/>
            <person name="Najar F.Z."/>
            <person name="Lai H."/>
            <person name="White J."/>
            <person name="Roe B.A."/>
            <person name="Ferretti J.J."/>
        </authorList>
    </citation>
    <scope>NUCLEOTIDE SEQUENCE [LARGE SCALE GENOMIC DNA]</scope>
    <source>
        <strain>ATCC 700610 / UA159</strain>
    </source>
</reference>
<protein>
    <recommendedName>
        <fullName evidence="1">Chromosomal replication initiator protein DnaA</fullName>
    </recommendedName>
</protein>
<name>DNAA_STRMU</name>
<comment type="function">
    <text evidence="1">Plays an essential role in the initiation and regulation of chromosomal replication. ATP-DnaA binds to the origin of replication (oriC) to initiate formation of the DNA replication initiation complex once per cell cycle. Binds the DnaA box (a 9 base pair repeat at the origin) and separates the double-stranded (ds)DNA. Forms a right-handed helical filament on oriC DNA; dsDNA binds to the exterior of the filament while single-stranded (ss)DNA is stabiized in the filament's interior. The ATP-DnaA-oriC complex binds and stabilizes one strand of the AT-rich DNA unwinding element (DUE), permitting loading of DNA polymerase. After initiation quickly degrades to an ADP-DnaA complex that is not apt for DNA replication. Binds acidic phospholipids.</text>
</comment>
<comment type="subunit">
    <text evidence="1">Oligomerizes as a right-handed, spiral filament on DNA at oriC.</text>
</comment>
<comment type="subcellular location">
    <subcellularLocation>
        <location evidence="1">Cytoplasm</location>
    </subcellularLocation>
</comment>
<comment type="domain">
    <text evidence="1">Domain I is involved in oligomerization and binding regulators, domain II is flexibile and of varying length in different bacteria, domain III forms the AAA+ region, while domain IV binds dsDNA.</text>
</comment>
<comment type="similarity">
    <text evidence="1">Belongs to the DnaA family.</text>
</comment>
<keyword id="KW-0067">ATP-binding</keyword>
<keyword id="KW-0963">Cytoplasm</keyword>
<keyword id="KW-0235">DNA replication</keyword>
<keyword id="KW-0238">DNA-binding</keyword>
<keyword id="KW-0446">Lipid-binding</keyword>
<keyword id="KW-0547">Nucleotide-binding</keyword>
<keyword id="KW-1185">Reference proteome</keyword>
<dbReference type="EMBL" id="AE014133">
    <property type="protein sequence ID" value="AAN57794.1"/>
    <property type="molecule type" value="Genomic_DNA"/>
</dbReference>
<dbReference type="RefSeq" id="NP_720488.1">
    <property type="nucleotide sequence ID" value="NC_004350.2"/>
</dbReference>
<dbReference type="RefSeq" id="WP_002262648.1">
    <property type="nucleotide sequence ID" value="NC_004350.2"/>
</dbReference>
<dbReference type="SMR" id="Q8DWN9"/>
<dbReference type="STRING" id="210007.SMU_01"/>
<dbReference type="GeneID" id="93860373"/>
<dbReference type="KEGG" id="smu:SMU_01"/>
<dbReference type="PATRIC" id="fig|210007.7.peg.1"/>
<dbReference type="eggNOG" id="COG0593">
    <property type="taxonomic scope" value="Bacteria"/>
</dbReference>
<dbReference type="HOGENOM" id="CLU_026910_3_1_9"/>
<dbReference type="OrthoDB" id="9807019at2"/>
<dbReference type="PhylomeDB" id="Q8DWN9"/>
<dbReference type="Proteomes" id="UP000002512">
    <property type="component" value="Chromosome"/>
</dbReference>
<dbReference type="GO" id="GO:0005737">
    <property type="term" value="C:cytoplasm"/>
    <property type="evidence" value="ECO:0007669"/>
    <property type="project" value="UniProtKB-SubCell"/>
</dbReference>
<dbReference type="GO" id="GO:0005886">
    <property type="term" value="C:plasma membrane"/>
    <property type="evidence" value="ECO:0007669"/>
    <property type="project" value="TreeGrafter"/>
</dbReference>
<dbReference type="GO" id="GO:0005524">
    <property type="term" value="F:ATP binding"/>
    <property type="evidence" value="ECO:0007669"/>
    <property type="project" value="UniProtKB-UniRule"/>
</dbReference>
<dbReference type="GO" id="GO:0016887">
    <property type="term" value="F:ATP hydrolysis activity"/>
    <property type="evidence" value="ECO:0007669"/>
    <property type="project" value="InterPro"/>
</dbReference>
<dbReference type="GO" id="GO:0003688">
    <property type="term" value="F:DNA replication origin binding"/>
    <property type="evidence" value="ECO:0007669"/>
    <property type="project" value="UniProtKB-UniRule"/>
</dbReference>
<dbReference type="GO" id="GO:0008289">
    <property type="term" value="F:lipid binding"/>
    <property type="evidence" value="ECO:0007669"/>
    <property type="project" value="UniProtKB-KW"/>
</dbReference>
<dbReference type="GO" id="GO:0006270">
    <property type="term" value="P:DNA replication initiation"/>
    <property type="evidence" value="ECO:0007669"/>
    <property type="project" value="UniProtKB-UniRule"/>
</dbReference>
<dbReference type="GO" id="GO:0006275">
    <property type="term" value="P:regulation of DNA replication"/>
    <property type="evidence" value="ECO:0007669"/>
    <property type="project" value="UniProtKB-UniRule"/>
</dbReference>
<dbReference type="CDD" id="cd00009">
    <property type="entry name" value="AAA"/>
    <property type="match status" value="1"/>
</dbReference>
<dbReference type="CDD" id="cd06571">
    <property type="entry name" value="Bac_DnaA_C"/>
    <property type="match status" value="1"/>
</dbReference>
<dbReference type="FunFam" id="1.10.1750.10:FF:000002">
    <property type="entry name" value="Chromosomal replication initiator protein DnaA"/>
    <property type="match status" value="1"/>
</dbReference>
<dbReference type="FunFam" id="3.40.50.300:FF:000668">
    <property type="entry name" value="Chromosomal replication initiator protein DnaA"/>
    <property type="match status" value="1"/>
</dbReference>
<dbReference type="Gene3D" id="1.10.1750.10">
    <property type="match status" value="1"/>
</dbReference>
<dbReference type="Gene3D" id="1.10.8.60">
    <property type="match status" value="1"/>
</dbReference>
<dbReference type="Gene3D" id="3.30.300.180">
    <property type="match status" value="1"/>
</dbReference>
<dbReference type="Gene3D" id="3.40.50.300">
    <property type="entry name" value="P-loop containing nucleotide triphosphate hydrolases"/>
    <property type="match status" value="1"/>
</dbReference>
<dbReference type="HAMAP" id="MF_00377">
    <property type="entry name" value="DnaA_bact"/>
    <property type="match status" value="1"/>
</dbReference>
<dbReference type="InterPro" id="IPR003593">
    <property type="entry name" value="AAA+_ATPase"/>
</dbReference>
<dbReference type="InterPro" id="IPR001957">
    <property type="entry name" value="Chromosome_initiator_DnaA"/>
</dbReference>
<dbReference type="InterPro" id="IPR020591">
    <property type="entry name" value="Chromosome_initiator_DnaA-like"/>
</dbReference>
<dbReference type="InterPro" id="IPR018312">
    <property type="entry name" value="Chromosome_initiator_DnaA_CS"/>
</dbReference>
<dbReference type="InterPro" id="IPR013159">
    <property type="entry name" value="DnaA_C"/>
</dbReference>
<dbReference type="InterPro" id="IPR013317">
    <property type="entry name" value="DnaA_dom"/>
</dbReference>
<dbReference type="InterPro" id="IPR038454">
    <property type="entry name" value="DnaA_N_sf"/>
</dbReference>
<dbReference type="InterPro" id="IPR027417">
    <property type="entry name" value="P-loop_NTPase"/>
</dbReference>
<dbReference type="InterPro" id="IPR010921">
    <property type="entry name" value="Trp_repressor/repl_initiator"/>
</dbReference>
<dbReference type="NCBIfam" id="TIGR00362">
    <property type="entry name" value="DnaA"/>
    <property type="match status" value="1"/>
</dbReference>
<dbReference type="PANTHER" id="PTHR30050">
    <property type="entry name" value="CHROMOSOMAL REPLICATION INITIATOR PROTEIN DNAA"/>
    <property type="match status" value="1"/>
</dbReference>
<dbReference type="PANTHER" id="PTHR30050:SF2">
    <property type="entry name" value="CHROMOSOMAL REPLICATION INITIATOR PROTEIN DNAA"/>
    <property type="match status" value="1"/>
</dbReference>
<dbReference type="Pfam" id="PF00308">
    <property type="entry name" value="Bac_DnaA"/>
    <property type="match status" value="1"/>
</dbReference>
<dbReference type="Pfam" id="PF08299">
    <property type="entry name" value="Bac_DnaA_C"/>
    <property type="match status" value="1"/>
</dbReference>
<dbReference type="PRINTS" id="PR00051">
    <property type="entry name" value="DNAA"/>
</dbReference>
<dbReference type="SMART" id="SM00382">
    <property type="entry name" value="AAA"/>
    <property type="match status" value="1"/>
</dbReference>
<dbReference type="SMART" id="SM00760">
    <property type="entry name" value="Bac_DnaA_C"/>
    <property type="match status" value="1"/>
</dbReference>
<dbReference type="SUPFAM" id="SSF52540">
    <property type="entry name" value="P-loop containing nucleoside triphosphate hydrolases"/>
    <property type="match status" value="1"/>
</dbReference>
<dbReference type="SUPFAM" id="SSF48295">
    <property type="entry name" value="TrpR-like"/>
    <property type="match status" value="1"/>
</dbReference>
<dbReference type="PROSITE" id="PS01008">
    <property type="entry name" value="DNAA"/>
    <property type="match status" value="1"/>
</dbReference>
<proteinExistence type="inferred from homology"/>
<organism>
    <name type="scientific">Streptococcus mutans serotype c (strain ATCC 700610 / UA159)</name>
    <dbReference type="NCBI Taxonomy" id="210007"/>
    <lineage>
        <taxon>Bacteria</taxon>
        <taxon>Bacillati</taxon>
        <taxon>Bacillota</taxon>
        <taxon>Bacilli</taxon>
        <taxon>Lactobacillales</taxon>
        <taxon>Streptococcaceae</taxon>
        <taxon>Streptococcus</taxon>
    </lineage>
</organism>
<evidence type="ECO:0000255" key="1">
    <source>
        <dbReference type="HAMAP-Rule" id="MF_00377"/>
    </source>
</evidence>
<sequence>MTENEQIFWNRVLELAQSQLKQATFDFFVSDAKLLKVEGNIATILLDDMKKLFWEKNLQPVVLTAGFEVFNTEISIEYVFEETQSTSNSPQISQNKTAELATETLPFVQNDLNPKYSFDNFVIGDENRWAFTASVSVADLPGTTYNPLFIYGGPGLGKTHLLNAIGNSVLASNPKARIKYISAENFINEFVVHIRLQNMDELKKKFRNLDLLLIDDIQSLAKKSLAATQEEFFNTFNALHDNNKQIVLTSDRTPDDLNDLEQRLVTRFKWGLTVNITPPDFETRVAILNNKIQEYNYSFLSETIEYLAGQFDSNVRDLEGALKDISLVANFKKLDVITVEVAAEAIRARKQDSSPKMIVIPIEDIQKQVGKFYGVTVKEIKSTKRTQNIVLARQVGMYLAREMTDNSLPKIGKEFGGRDHSTVLHAYNKIKNMLAQDDSLKIEMETIKNKIK</sequence>
<accession>Q8DWN9</accession>
<feature type="chain" id="PRO_0000114272" description="Chromosomal replication initiator protein DnaA">
    <location>
        <begin position="1"/>
        <end position="452"/>
    </location>
</feature>
<feature type="region of interest" description="Domain I, interacts with DnaA modulators" evidence="1">
    <location>
        <begin position="1"/>
        <end position="84"/>
    </location>
</feature>
<feature type="region of interest" description="Domain II" evidence="1">
    <location>
        <begin position="84"/>
        <end position="110"/>
    </location>
</feature>
<feature type="region of interest" description="Domain III, AAA+ region" evidence="1">
    <location>
        <begin position="111"/>
        <end position="329"/>
    </location>
</feature>
<feature type="region of interest" description="Domain IV, binds dsDNA" evidence="1">
    <location>
        <begin position="330"/>
        <end position="452"/>
    </location>
</feature>
<feature type="binding site" evidence="1">
    <location>
        <position position="155"/>
    </location>
    <ligand>
        <name>ATP</name>
        <dbReference type="ChEBI" id="CHEBI:30616"/>
    </ligand>
</feature>
<feature type="binding site" evidence="1">
    <location>
        <position position="157"/>
    </location>
    <ligand>
        <name>ATP</name>
        <dbReference type="ChEBI" id="CHEBI:30616"/>
    </ligand>
</feature>
<feature type="binding site" evidence="1">
    <location>
        <position position="158"/>
    </location>
    <ligand>
        <name>ATP</name>
        <dbReference type="ChEBI" id="CHEBI:30616"/>
    </ligand>
</feature>
<feature type="binding site" evidence="1">
    <location>
        <position position="159"/>
    </location>
    <ligand>
        <name>ATP</name>
        <dbReference type="ChEBI" id="CHEBI:30616"/>
    </ligand>
</feature>